<dbReference type="EC" id="4.2.1.11"/>
<dbReference type="EMBL" id="AAFI02000050">
    <property type="protein sequence ID" value="EAL65898.1"/>
    <property type="molecule type" value="Genomic_DNA"/>
</dbReference>
<dbReference type="RefSeq" id="XP_639231.1">
    <property type="nucleotide sequence ID" value="XM_634139.1"/>
</dbReference>
<dbReference type="SMR" id="Q54RK5"/>
<dbReference type="FunCoup" id="Q54RK5">
    <property type="interactions" value="312"/>
</dbReference>
<dbReference type="STRING" id="44689.Q54RK5"/>
<dbReference type="PaxDb" id="44689-DDB0231355"/>
<dbReference type="EnsemblProtists" id="EAL65898">
    <property type="protein sequence ID" value="EAL65898"/>
    <property type="gene ID" value="DDB_G0283137"/>
</dbReference>
<dbReference type="GeneID" id="8623917"/>
<dbReference type="KEGG" id="ddi:DDB_G0283137"/>
<dbReference type="dictyBase" id="DDB_G0283137">
    <property type="gene designation" value="enoA"/>
</dbReference>
<dbReference type="VEuPathDB" id="AmoebaDB:DDB_G0283137"/>
<dbReference type="eggNOG" id="KOG2670">
    <property type="taxonomic scope" value="Eukaryota"/>
</dbReference>
<dbReference type="HOGENOM" id="CLU_031223_0_0_1"/>
<dbReference type="InParanoid" id="Q54RK5"/>
<dbReference type="OMA" id="RCMMSHR"/>
<dbReference type="PhylomeDB" id="Q54RK5"/>
<dbReference type="Reactome" id="R-DDI-70171">
    <property type="pathway name" value="Glycolysis"/>
</dbReference>
<dbReference type="Reactome" id="R-DDI-70263">
    <property type="pathway name" value="Gluconeogenesis"/>
</dbReference>
<dbReference type="UniPathway" id="UPA00109">
    <property type="reaction ID" value="UER00187"/>
</dbReference>
<dbReference type="PRO" id="PR:Q54RK5"/>
<dbReference type="Proteomes" id="UP000002195">
    <property type="component" value="Chromosome 4"/>
</dbReference>
<dbReference type="GO" id="GO:0031012">
    <property type="term" value="C:extracellular matrix"/>
    <property type="evidence" value="ECO:0007005"/>
    <property type="project" value="dictyBase"/>
</dbReference>
<dbReference type="GO" id="GO:0000015">
    <property type="term" value="C:phosphopyruvate hydratase complex"/>
    <property type="evidence" value="ECO:0000318"/>
    <property type="project" value="GO_Central"/>
</dbReference>
<dbReference type="GO" id="GO:0000287">
    <property type="term" value="F:magnesium ion binding"/>
    <property type="evidence" value="ECO:0007669"/>
    <property type="project" value="InterPro"/>
</dbReference>
<dbReference type="GO" id="GO:0004634">
    <property type="term" value="F:phosphopyruvate hydratase activity"/>
    <property type="evidence" value="ECO:0000318"/>
    <property type="project" value="GO_Central"/>
</dbReference>
<dbReference type="GO" id="GO:0006096">
    <property type="term" value="P:glycolytic process"/>
    <property type="evidence" value="ECO:0000318"/>
    <property type="project" value="GO_Central"/>
</dbReference>
<dbReference type="GO" id="GO:0019953">
    <property type="term" value="P:sexual reproduction"/>
    <property type="evidence" value="ECO:0000270"/>
    <property type="project" value="dictyBase"/>
</dbReference>
<dbReference type="CDD" id="cd03313">
    <property type="entry name" value="enolase"/>
    <property type="match status" value="1"/>
</dbReference>
<dbReference type="FunFam" id="3.30.390.10:FF:000001">
    <property type="entry name" value="Enolase"/>
    <property type="match status" value="1"/>
</dbReference>
<dbReference type="FunFam" id="3.20.20.120:FF:000002">
    <property type="entry name" value="Enolase 1"/>
    <property type="match status" value="1"/>
</dbReference>
<dbReference type="Gene3D" id="3.20.20.120">
    <property type="entry name" value="Enolase-like C-terminal domain"/>
    <property type="match status" value="1"/>
</dbReference>
<dbReference type="Gene3D" id="3.30.390.10">
    <property type="entry name" value="Enolase-like, N-terminal domain"/>
    <property type="match status" value="1"/>
</dbReference>
<dbReference type="HAMAP" id="MF_00318">
    <property type="entry name" value="Enolase"/>
    <property type="match status" value="1"/>
</dbReference>
<dbReference type="InterPro" id="IPR000941">
    <property type="entry name" value="Enolase"/>
</dbReference>
<dbReference type="InterPro" id="IPR036849">
    <property type="entry name" value="Enolase-like_C_sf"/>
</dbReference>
<dbReference type="InterPro" id="IPR029017">
    <property type="entry name" value="Enolase-like_N"/>
</dbReference>
<dbReference type="InterPro" id="IPR020810">
    <property type="entry name" value="Enolase_C"/>
</dbReference>
<dbReference type="InterPro" id="IPR020809">
    <property type="entry name" value="Enolase_CS"/>
</dbReference>
<dbReference type="InterPro" id="IPR020811">
    <property type="entry name" value="Enolase_N"/>
</dbReference>
<dbReference type="NCBIfam" id="TIGR01060">
    <property type="entry name" value="eno"/>
    <property type="match status" value="1"/>
</dbReference>
<dbReference type="PANTHER" id="PTHR11902">
    <property type="entry name" value="ENOLASE"/>
    <property type="match status" value="1"/>
</dbReference>
<dbReference type="PANTHER" id="PTHR11902:SF1">
    <property type="entry name" value="ENOLASE"/>
    <property type="match status" value="1"/>
</dbReference>
<dbReference type="Pfam" id="PF00113">
    <property type="entry name" value="Enolase_C"/>
    <property type="match status" value="1"/>
</dbReference>
<dbReference type="Pfam" id="PF03952">
    <property type="entry name" value="Enolase_N"/>
    <property type="match status" value="1"/>
</dbReference>
<dbReference type="PIRSF" id="PIRSF001400">
    <property type="entry name" value="Enolase"/>
    <property type="match status" value="1"/>
</dbReference>
<dbReference type="PRINTS" id="PR00148">
    <property type="entry name" value="ENOLASE"/>
</dbReference>
<dbReference type="SFLD" id="SFLDS00001">
    <property type="entry name" value="Enolase"/>
    <property type="match status" value="1"/>
</dbReference>
<dbReference type="SFLD" id="SFLDF00002">
    <property type="entry name" value="enolase"/>
    <property type="match status" value="1"/>
</dbReference>
<dbReference type="SMART" id="SM01192">
    <property type="entry name" value="Enolase_C"/>
    <property type="match status" value="1"/>
</dbReference>
<dbReference type="SMART" id="SM01193">
    <property type="entry name" value="Enolase_N"/>
    <property type="match status" value="1"/>
</dbReference>
<dbReference type="SUPFAM" id="SSF51604">
    <property type="entry name" value="Enolase C-terminal domain-like"/>
    <property type="match status" value="1"/>
</dbReference>
<dbReference type="SUPFAM" id="SSF54826">
    <property type="entry name" value="Enolase N-terminal domain-like"/>
    <property type="match status" value="1"/>
</dbReference>
<dbReference type="PROSITE" id="PS00164">
    <property type="entry name" value="ENOLASE"/>
    <property type="match status" value="1"/>
</dbReference>
<gene>
    <name type="primary">enoA</name>
    <name type="ORF">DDB_G0283137</name>
</gene>
<reference key="1">
    <citation type="journal article" date="2005" name="Nature">
        <title>The genome of the social amoeba Dictyostelium discoideum.</title>
        <authorList>
            <person name="Eichinger L."/>
            <person name="Pachebat J.A."/>
            <person name="Gloeckner G."/>
            <person name="Rajandream M.A."/>
            <person name="Sucgang R."/>
            <person name="Berriman M."/>
            <person name="Song J."/>
            <person name="Olsen R."/>
            <person name="Szafranski K."/>
            <person name="Xu Q."/>
            <person name="Tunggal B."/>
            <person name="Kummerfeld S."/>
            <person name="Madera M."/>
            <person name="Konfortov B.A."/>
            <person name="Rivero F."/>
            <person name="Bankier A.T."/>
            <person name="Lehmann R."/>
            <person name="Hamlin N."/>
            <person name="Davies R."/>
            <person name="Gaudet P."/>
            <person name="Fey P."/>
            <person name="Pilcher K."/>
            <person name="Chen G."/>
            <person name="Saunders D."/>
            <person name="Sodergren E.J."/>
            <person name="Davis P."/>
            <person name="Kerhornou A."/>
            <person name="Nie X."/>
            <person name="Hall N."/>
            <person name="Anjard C."/>
            <person name="Hemphill L."/>
            <person name="Bason N."/>
            <person name="Farbrother P."/>
            <person name="Desany B."/>
            <person name="Just E."/>
            <person name="Morio T."/>
            <person name="Rost R."/>
            <person name="Churcher C.M."/>
            <person name="Cooper J."/>
            <person name="Haydock S."/>
            <person name="van Driessche N."/>
            <person name="Cronin A."/>
            <person name="Goodhead I."/>
            <person name="Muzny D.M."/>
            <person name="Mourier T."/>
            <person name="Pain A."/>
            <person name="Lu M."/>
            <person name="Harper D."/>
            <person name="Lindsay R."/>
            <person name="Hauser H."/>
            <person name="James K.D."/>
            <person name="Quiles M."/>
            <person name="Madan Babu M."/>
            <person name="Saito T."/>
            <person name="Buchrieser C."/>
            <person name="Wardroper A."/>
            <person name="Felder M."/>
            <person name="Thangavelu M."/>
            <person name="Johnson D."/>
            <person name="Knights A."/>
            <person name="Loulseged H."/>
            <person name="Mungall K.L."/>
            <person name="Oliver K."/>
            <person name="Price C."/>
            <person name="Quail M.A."/>
            <person name="Urushihara H."/>
            <person name="Hernandez J."/>
            <person name="Rabbinowitsch E."/>
            <person name="Steffen D."/>
            <person name="Sanders M."/>
            <person name="Ma J."/>
            <person name="Kohara Y."/>
            <person name="Sharp S."/>
            <person name="Simmonds M.N."/>
            <person name="Spiegler S."/>
            <person name="Tivey A."/>
            <person name="Sugano S."/>
            <person name="White B."/>
            <person name="Walker D."/>
            <person name="Woodward J.R."/>
            <person name="Winckler T."/>
            <person name="Tanaka Y."/>
            <person name="Shaulsky G."/>
            <person name="Schleicher M."/>
            <person name="Weinstock G.M."/>
            <person name="Rosenthal A."/>
            <person name="Cox E.C."/>
            <person name="Chisholm R.L."/>
            <person name="Gibbs R.A."/>
            <person name="Loomis W.F."/>
            <person name="Platzer M."/>
            <person name="Kay R.R."/>
            <person name="Williams J.G."/>
            <person name="Dear P.H."/>
            <person name="Noegel A.A."/>
            <person name="Barrell B.G."/>
            <person name="Kuspa A."/>
        </authorList>
    </citation>
    <scope>NUCLEOTIDE SEQUENCE [LARGE SCALE GENOMIC DNA]</scope>
    <source>
        <strain>AX4</strain>
    </source>
</reference>
<protein>
    <recommendedName>
        <fullName>Enolase A</fullName>
        <ecNumber>4.2.1.11</ecNumber>
    </recommendedName>
    <alternativeName>
        <fullName>2-phospho-D-glycerate hydro-lyase A</fullName>
    </alternativeName>
    <alternativeName>
        <fullName>2-phosphoglycerate dehydratase A</fullName>
    </alternativeName>
</protein>
<feature type="chain" id="PRO_0000330350" description="Enolase A">
    <location>
        <begin position="1"/>
        <end position="434"/>
    </location>
</feature>
<feature type="active site" description="Proton donor" evidence="1">
    <location>
        <position position="212"/>
    </location>
</feature>
<feature type="active site" description="Proton acceptor" evidence="1">
    <location>
        <position position="346"/>
    </location>
</feature>
<feature type="binding site" evidence="1">
    <location>
        <position position="160"/>
    </location>
    <ligand>
        <name>substrate</name>
    </ligand>
</feature>
<feature type="binding site" evidence="1">
    <location>
        <position position="169"/>
    </location>
    <ligand>
        <name>substrate</name>
    </ligand>
</feature>
<feature type="binding site" evidence="1">
    <location>
        <position position="247"/>
    </location>
    <ligand>
        <name>Mg(2+)</name>
        <dbReference type="ChEBI" id="CHEBI:18420"/>
    </ligand>
</feature>
<feature type="binding site" evidence="1">
    <location>
        <position position="296"/>
    </location>
    <ligand>
        <name>Mg(2+)</name>
        <dbReference type="ChEBI" id="CHEBI:18420"/>
    </ligand>
</feature>
<feature type="binding site" evidence="1">
    <location>
        <position position="296"/>
    </location>
    <ligand>
        <name>substrate</name>
    </ligand>
</feature>
<feature type="binding site" evidence="1">
    <location>
        <position position="321"/>
    </location>
    <ligand>
        <name>Mg(2+)</name>
        <dbReference type="ChEBI" id="CHEBI:18420"/>
    </ligand>
</feature>
<feature type="binding site" evidence="1">
    <location>
        <position position="321"/>
    </location>
    <ligand>
        <name>substrate</name>
    </ligand>
</feature>
<feature type="binding site" evidence="1">
    <location>
        <begin position="373"/>
        <end position="376"/>
    </location>
    <ligand>
        <name>substrate</name>
    </ligand>
</feature>
<feature type="binding site" evidence="1">
    <location>
        <position position="397"/>
    </location>
    <ligand>
        <name>substrate</name>
    </ligand>
</feature>
<accession>Q54RK5</accession>
<name>ENOA_DICDI</name>
<keyword id="KW-0963">Cytoplasm</keyword>
<keyword id="KW-0324">Glycolysis</keyword>
<keyword id="KW-0456">Lyase</keyword>
<keyword id="KW-0460">Magnesium</keyword>
<keyword id="KW-0479">Metal-binding</keyword>
<keyword id="KW-1185">Reference proteome</keyword>
<proteinExistence type="inferred from homology"/>
<comment type="catalytic activity">
    <reaction>
        <text>(2R)-2-phosphoglycerate = phosphoenolpyruvate + H2O</text>
        <dbReference type="Rhea" id="RHEA:10164"/>
        <dbReference type="ChEBI" id="CHEBI:15377"/>
        <dbReference type="ChEBI" id="CHEBI:58289"/>
        <dbReference type="ChEBI" id="CHEBI:58702"/>
        <dbReference type="EC" id="4.2.1.11"/>
    </reaction>
</comment>
<comment type="cofactor">
    <cofactor evidence="1">
        <name>Mg(2+)</name>
        <dbReference type="ChEBI" id="CHEBI:18420"/>
    </cofactor>
    <text evidence="1">Mg(2+) is required for catalysis and for stabilizing the dimer.</text>
</comment>
<comment type="pathway">
    <text>Carbohydrate degradation; glycolysis; pyruvate from D-glyceraldehyde 3-phosphate: step 4/5.</text>
</comment>
<comment type="subunit">
    <text evidence="1">Homodimer.</text>
</comment>
<comment type="subcellular location">
    <subcellularLocation>
        <location evidence="1">Cytoplasm</location>
    </subcellularLocation>
</comment>
<comment type="similarity">
    <text evidence="2">Belongs to the enolase family.</text>
</comment>
<sequence length="434" mass="46991">MSVIKSIKAREILNSRGNPTVEVDLYTEKDGVVSSFRAAVPSGASTGIYEAVELRDGDKSRYLGKGVLKAIKNILEVIQPAVIGKSVSDQAAIDKLMIDLDGTPNKGKLGANAILAVSLAVCRAGAADRNLPLYKYISEIAGTKMRLPVPAFNVINGGSHAGNKLAMQEFMILPVGAKDFNEAYRMGSEVYHNLKNVISGRYGQDAINVGDEGGFAPPIQSNKEGLELLKLAIEKAGYTGLVKIGMDCAASEFKVENGYDLDFKTKNNDGSAVISGEKLGDLYREFIKEYPIISIEDPFDQDDWESYTKLTASVDIQIVGDDLLVTNPERIKTGIEKKACNALLLKVNQIGSVTESIRAALDSKNASWGVMVSHRSGETEDTFIADLVVGLGTGQIKTGAPCRSERLAKYNQLVRINEELGENHNYAGLTFRKF</sequence>
<organism>
    <name type="scientific">Dictyostelium discoideum</name>
    <name type="common">Social amoeba</name>
    <dbReference type="NCBI Taxonomy" id="44689"/>
    <lineage>
        <taxon>Eukaryota</taxon>
        <taxon>Amoebozoa</taxon>
        <taxon>Evosea</taxon>
        <taxon>Eumycetozoa</taxon>
        <taxon>Dictyostelia</taxon>
        <taxon>Dictyosteliales</taxon>
        <taxon>Dictyosteliaceae</taxon>
        <taxon>Dictyostelium</taxon>
    </lineage>
</organism>
<evidence type="ECO:0000250" key="1"/>
<evidence type="ECO:0000305" key="2"/>